<accession>A6U2D5</accession>
<sequence length="428" mass="46389">MRYTKSEEAMKVAETLMPGGVNSPVRAFKSVDTPAIFMDHGKGSKIYDIDGNEYIDYVLSWGPLILGHRDPQVISHLHEAIDKGTSFGASTLLENKLAQLVIDRVPSIEKVRMVSSGTEATLDTLRLARGYTGRNKIVKFEGCYHGHSDSLLIKAGSGVATLGLPDSPGVPEGIAKNTITVPYNDLDALKIAFEKFGDDIAGVIVEPVAGNMGVVPPIEGFLQGLRDITTEYGALLIFDEVMTGFRVGYHCAQGYFGVTPDLTCLGKVIGGGLPVGAFGGKKEIMDHIAPLGNIYQAGTLSGNPLAMTSGYETLSQLTPETYEYFNMLGDILEDGLKRVFAKHNVPITVNRAGSMIGYFLNEGPVTNFEQANKSDLKLFAEMYREMAKEGVFLPPSQFEGTFLSTAHTKEDIEKTIQAFDTALSRIVK</sequence>
<gene>
    <name evidence="1" type="primary">hemL1</name>
    <name type="ordered locus">SaurJH1_1759</name>
</gene>
<reference key="1">
    <citation type="submission" date="2007-06" db="EMBL/GenBank/DDBJ databases">
        <title>Complete sequence of chromosome of Staphylococcus aureus subsp. aureus JH1.</title>
        <authorList>
            <consortium name="US DOE Joint Genome Institute"/>
            <person name="Copeland A."/>
            <person name="Lucas S."/>
            <person name="Lapidus A."/>
            <person name="Barry K."/>
            <person name="Detter J.C."/>
            <person name="Glavina del Rio T."/>
            <person name="Hammon N."/>
            <person name="Israni S."/>
            <person name="Dalin E."/>
            <person name="Tice H."/>
            <person name="Pitluck S."/>
            <person name="Chain P."/>
            <person name="Malfatti S."/>
            <person name="Shin M."/>
            <person name="Vergez L."/>
            <person name="Schmutz J."/>
            <person name="Larimer F."/>
            <person name="Land M."/>
            <person name="Hauser L."/>
            <person name="Kyrpides N."/>
            <person name="Ivanova N."/>
            <person name="Tomasz A."/>
            <person name="Richardson P."/>
        </authorList>
    </citation>
    <scope>NUCLEOTIDE SEQUENCE [LARGE SCALE GENOMIC DNA]</scope>
    <source>
        <strain>JH1</strain>
    </source>
</reference>
<dbReference type="EC" id="5.4.3.8" evidence="1"/>
<dbReference type="EMBL" id="CP000736">
    <property type="protein sequence ID" value="ABR52603.1"/>
    <property type="molecule type" value="Genomic_DNA"/>
</dbReference>
<dbReference type="SMR" id="A6U2D5"/>
<dbReference type="KEGG" id="sah:SaurJH1_1759"/>
<dbReference type="HOGENOM" id="CLU_016922_1_5_9"/>
<dbReference type="UniPathway" id="UPA00251">
    <property type="reaction ID" value="UER00317"/>
</dbReference>
<dbReference type="GO" id="GO:0005737">
    <property type="term" value="C:cytoplasm"/>
    <property type="evidence" value="ECO:0007669"/>
    <property type="project" value="UniProtKB-SubCell"/>
</dbReference>
<dbReference type="GO" id="GO:0042286">
    <property type="term" value="F:glutamate-1-semialdehyde 2,1-aminomutase activity"/>
    <property type="evidence" value="ECO:0007669"/>
    <property type="project" value="UniProtKB-UniRule"/>
</dbReference>
<dbReference type="GO" id="GO:0030170">
    <property type="term" value="F:pyridoxal phosphate binding"/>
    <property type="evidence" value="ECO:0007669"/>
    <property type="project" value="InterPro"/>
</dbReference>
<dbReference type="GO" id="GO:0008483">
    <property type="term" value="F:transaminase activity"/>
    <property type="evidence" value="ECO:0007669"/>
    <property type="project" value="InterPro"/>
</dbReference>
<dbReference type="GO" id="GO:0006782">
    <property type="term" value="P:protoporphyrinogen IX biosynthetic process"/>
    <property type="evidence" value="ECO:0007669"/>
    <property type="project" value="UniProtKB-UniRule"/>
</dbReference>
<dbReference type="CDD" id="cd00610">
    <property type="entry name" value="OAT_like"/>
    <property type="match status" value="1"/>
</dbReference>
<dbReference type="FunFam" id="3.40.640.10:FF:000021">
    <property type="entry name" value="Glutamate-1-semialdehyde 2,1-aminomutase"/>
    <property type="match status" value="1"/>
</dbReference>
<dbReference type="Gene3D" id="3.90.1150.10">
    <property type="entry name" value="Aspartate Aminotransferase, domain 1"/>
    <property type="match status" value="1"/>
</dbReference>
<dbReference type="Gene3D" id="3.40.640.10">
    <property type="entry name" value="Type I PLP-dependent aspartate aminotransferase-like (Major domain)"/>
    <property type="match status" value="1"/>
</dbReference>
<dbReference type="HAMAP" id="MF_00375">
    <property type="entry name" value="HemL_aminotrans_3"/>
    <property type="match status" value="1"/>
</dbReference>
<dbReference type="InterPro" id="IPR004639">
    <property type="entry name" value="4pyrrol_synth_GluAld_NH2Trfase"/>
</dbReference>
<dbReference type="InterPro" id="IPR005814">
    <property type="entry name" value="Aminotrans_3"/>
</dbReference>
<dbReference type="InterPro" id="IPR049704">
    <property type="entry name" value="Aminotrans_3_PPA_site"/>
</dbReference>
<dbReference type="InterPro" id="IPR015424">
    <property type="entry name" value="PyrdxlP-dep_Trfase"/>
</dbReference>
<dbReference type="InterPro" id="IPR015421">
    <property type="entry name" value="PyrdxlP-dep_Trfase_major"/>
</dbReference>
<dbReference type="InterPro" id="IPR015422">
    <property type="entry name" value="PyrdxlP-dep_Trfase_small"/>
</dbReference>
<dbReference type="NCBIfam" id="TIGR00713">
    <property type="entry name" value="hemL"/>
    <property type="match status" value="1"/>
</dbReference>
<dbReference type="NCBIfam" id="NF000818">
    <property type="entry name" value="PRK00062.1"/>
    <property type="match status" value="1"/>
</dbReference>
<dbReference type="PANTHER" id="PTHR43713">
    <property type="entry name" value="GLUTAMATE-1-SEMIALDEHYDE 2,1-AMINOMUTASE"/>
    <property type="match status" value="1"/>
</dbReference>
<dbReference type="PANTHER" id="PTHR43713:SF3">
    <property type="entry name" value="GLUTAMATE-1-SEMIALDEHYDE 2,1-AMINOMUTASE 1, CHLOROPLASTIC-RELATED"/>
    <property type="match status" value="1"/>
</dbReference>
<dbReference type="Pfam" id="PF00202">
    <property type="entry name" value="Aminotran_3"/>
    <property type="match status" value="1"/>
</dbReference>
<dbReference type="SUPFAM" id="SSF53383">
    <property type="entry name" value="PLP-dependent transferases"/>
    <property type="match status" value="1"/>
</dbReference>
<dbReference type="PROSITE" id="PS00600">
    <property type="entry name" value="AA_TRANSFER_CLASS_3"/>
    <property type="match status" value="1"/>
</dbReference>
<name>GSA1_STAA2</name>
<evidence type="ECO:0000255" key="1">
    <source>
        <dbReference type="HAMAP-Rule" id="MF_00375"/>
    </source>
</evidence>
<keyword id="KW-0963">Cytoplasm</keyword>
<keyword id="KW-0413">Isomerase</keyword>
<keyword id="KW-0627">Porphyrin biosynthesis</keyword>
<keyword id="KW-0663">Pyridoxal phosphate</keyword>
<comment type="catalytic activity">
    <reaction evidence="1">
        <text>(S)-4-amino-5-oxopentanoate = 5-aminolevulinate</text>
        <dbReference type="Rhea" id="RHEA:14265"/>
        <dbReference type="ChEBI" id="CHEBI:57501"/>
        <dbReference type="ChEBI" id="CHEBI:356416"/>
        <dbReference type="EC" id="5.4.3.8"/>
    </reaction>
</comment>
<comment type="cofactor">
    <cofactor evidence="1">
        <name>pyridoxal 5'-phosphate</name>
        <dbReference type="ChEBI" id="CHEBI:597326"/>
    </cofactor>
</comment>
<comment type="pathway">
    <text evidence="1">Porphyrin-containing compound metabolism; protoporphyrin-IX biosynthesis; 5-aminolevulinate from L-glutamyl-tRNA(Glu): step 2/2.</text>
</comment>
<comment type="subunit">
    <text evidence="1">Homodimer.</text>
</comment>
<comment type="subcellular location">
    <subcellularLocation>
        <location evidence="1">Cytoplasm</location>
    </subcellularLocation>
</comment>
<comment type="similarity">
    <text evidence="1">Belongs to the class-III pyridoxal-phosphate-dependent aminotransferase family. HemL subfamily.</text>
</comment>
<proteinExistence type="inferred from homology"/>
<protein>
    <recommendedName>
        <fullName evidence="1">Glutamate-1-semialdehyde 2,1-aminomutase 1</fullName>
        <shortName evidence="1">GSA 1</shortName>
        <ecNumber evidence="1">5.4.3.8</ecNumber>
    </recommendedName>
    <alternativeName>
        <fullName evidence="1">Glutamate-1-semialdehyde aminotransferase 1</fullName>
        <shortName evidence="1">GSA-AT 1</shortName>
    </alternativeName>
</protein>
<organism>
    <name type="scientific">Staphylococcus aureus (strain JH1)</name>
    <dbReference type="NCBI Taxonomy" id="359787"/>
    <lineage>
        <taxon>Bacteria</taxon>
        <taxon>Bacillati</taxon>
        <taxon>Bacillota</taxon>
        <taxon>Bacilli</taxon>
        <taxon>Bacillales</taxon>
        <taxon>Staphylococcaceae</taxon>
        <taxon>Staphylococcus</taxon>
    </lineage>
</organism>
<feature type="chain" id="PRO_0000382370" description="Glutamate-1-semialdehyde 2,1-aminomutase 1">
    <location>
        <begin position="1"/>
        <end position="428"/>
    </location>
</feature>
<feature type="modified residue" description="N6-(pyridoxal phosphate)lysine" evidence="1">
    <location>
        <position position="267"/>
    </location>
</feature>